<organism>
    <name type="scientific">Bacillus sp. (strain 1011)</name>
    <dbReference type="NCBI Taxonomy" id="1410"/>
    <lineage>
        <taxon>Bacteria</taxon>
        <taxon>Bacillati</taxon>
        <taxon>Bacillota</taxon>
        <taxon>Bacilli</taxon>
        <taxon>Bacillales</taxon>
        <taxon>Bacillaceae</taxon>
        <taxon>Bacillus</taxon>
    </lineage>
</organism>
<reference key="1">
    <citation type="journal article" date="1987" name="J. Bacteriol.">
        <title>Nucleotide sequence of the beta-cyclodextrin glucanotransferase gene of alkalophilic Bacillus sp. strain 1011 and similarity of its amino acid sequence to those of alpha-amylases.</title>
        <authorList>
            <person name="Kimura K."/>
            <person name="Kataoka S."/>
            <person name="Ishii Y."/>
            <person name="Takano T."/>
            <person name="Yamane K."/>
        </authorList>
    </citation>
    <scope>NUCLEOTIDE SEQUENCE [GENOMIC DNA]</scope>
</reference>
<reference key="2">
    <citation type="journal article" date="1996" name="Acta Crystallogr. D">
        <title>X-ray structure of cyclodextrin glucanotransferase from alkalophilic Bacillus Sp. 1011. Comparison of two independent molecules at 1.8-A resolution.</title>
        <authorList>
            <person name="Harata K."/>
            <person name="Haga K."/>
            <person name="Nakamura A."/>
            <person name="Aoyagi M."/>
            <person name="Yamane K."/>
        </authorList>
    </citation>
    <scope>X-RAY CRYSTALLOGRAPHY (1.8 ANGSTROMS) OF 28-713</scope>
</reference>
<feature type="signal peptide">
    <location>
        <begin position="1"/>
        <end position="27"/>
    </location>
</feature>
<feature type="chain" id="PRO_0000001437" description="Cyclomaltodextrin glucanotransferase">
    <location>
        <begin position="28"/>
        <end position="713"/>
    </location>
</feature>
<feature type="domain" description="IPT/TIG">
    <location>
        <begin position="526"/>
        <end position="607"/>
    </location>
</feature>
<feature type="domain" description="CBM20" evidence="2">
    <location>
        <begin position="608"/>
        <end position="713"/>
    </location>
</feature>
<feature type="region of interest" description="A1">
    <location>
        <begin position="28"/>
        <end position="165"/>
    </location>
</feature>
<feature type="region of interest" description="B">
    <location>
        <begin position="166"/>
        <end position="229"/>
    </location>
</feature>
<feature type="region of interest" description="A2">
    <location>
        <begin position="230"/>
        <end position="433"/>
    </location>
</feature>
<feature type="region of interest" description="C">
    <location>
        <begin position="434"/>
        <end position="522"/>
    </location>
</feature>
<feature type="region of interest" description="D">
    <location>
        <begin position="523"/>
        <end position="609"/>
    </location>
</feature>
<feature type="region of interest" description="E">
    <location>
        <begin position="610"/>
        <end position="713"/>
    </location>
</feature>
<feature type="active site" description="Nucleophile">
    <location>
        <position position="256"/>
    </location>
</feature>
<feature type="active site" description="Proton donor">
    <location>
        <position position="284"/>
    </location>
</feature>
<feature type="binding site">
    <location>
        <position position="54"/>
    </location>
    <ligand>
        <name>Ca(2+)</name>
        <dbReference type="ChEBI" id="CHEBI:29108"/>
        <label>1</label>
    </ligand>
</feature>
<feature type="binding site">
    <location>
        <position position="56"/>
    </location>
    <ligand>
        <name>Ca(2+)</name>
        <dbReference type="ChEBI" id="CHEBI:29108"/>
        <label>1</label>
    </ligand>
</feature>
<feature type="binding site">
    <location>
        <position position="59"/>
    </location>
    <ligand>
        <name>Ca(2+)</name>
        <dbReference type="ChEBI" id="CHEBI:29108"/>
        <label>1</label>
    </ligand>
</feature>
<feature type="binding site">
    <location>
        <position position="60"/>
    </location>
    <ligand>
        <name>Ca(2+)</name>
        <dbReference type="ChEBI" id="CHEBI:29108"/>
        <label>1</label>
    </ligand>
</feature>
<feature type="binding site">
    <location>
        <position position="78"/>
    </location>
    <ligand>
        <name>Ca(2+)</name>
        <dbReference type="ChEBI" id="CHEBI:29108"/>
        <label>1</label>
    </ligand>
</feature>
<feature type="binding site">
    <location>
        <position position="80"/>
    </location>
    <ligand>
        <name>Ca(2+)</name>
        <dbReference type="ChEBI" id="CHEBI:29108"/>
        <label>1</label>
    </ligand>
</feature>
<feature type="binding site">
    <location>
        <begin position="127"/>
        <end position="128"/>
    </location>
    <ligand>
        <name>substrate</name>
    </ligand>
</feature>
<feature type="binding site">
    <location>
        <position position="166"/>
    </location>
    <ligand>
        <name>Ca(2+)</name>
        <dbReference type="ChEBI" id="CHEBI:29108"/>
        <label>2</label>
    </ligand>
</feature>
<feature type="binding site" evidence="1">
    <location>
        <position position="167"/>
    </location>
    <ligand>
        <name>substrate</name>
    </ligand>
</feature>
<feature type="binding site">
    <location>
        <position position="217"/>
    </location>
    <ligand>
        <name>Ca(2+)</name>
        <dbReference type="ChEBI" id="CHEBI:29108"/>
        <label>2</label>
    </ligand>
</feature>
<feature type="binding site">
    <location>
        <begin position="220"/>
        <end position="223"/>
    </location>
    <ligand>
        <name>substrate</name>
    </ligand>
</feature>
<feature type="binding site">
    <location>
        <position position="226"/>
    </location>
    <ligand>
        <name>Ca(2+)</name>
        <dbReference type="ChEBI" id="CHEBI:29108"/>
        <label>2</label>
    </ligand>
</feature>
<feature type="binding site" evidence="1">
    <location>
        <position position="254"/>
    </location>
    <ligand>
        <name>substrate</name>
    </ligand>
</feature>
<feature type="binding site" evidence="1">
    <location>
        <begin position="259"/>
        <end position="260"/>
    </location>
    <ligand>
        <name>substrate</name>
    </ligand>
</feature>
<feature type="binding site">
    <location>
        <position position="260"/>
    </location>
    <ligand>
        <name>Ca(2+)</name>
        <dbReference type="ChEBI" id="CHEBI:29108"/>
        <label>2</label>
    </ligand>
</feature>
<feature type="binding site" evidence="1">
    <location>
        <position position="354"/>
    </location>
    <ligand>
        <name>substrate</name>
    </ligand>
</feature>
<feature type="binding site">
    <location>
        <position position="398"/>
    </location>
    <ligand>
        <name>substrate</name>
    </ligand>
</feature>
<feature type="binding site">
    <location>
        <position position="402"/>
    </location>
    <ligand>
        <name>substrate</name>
    </ligand>
</feature>
<feature type="site" description="Transition state stabilizer" evidence="1">
    <location>
        <position position="355"/>
    </location>
</feature>
<feature type="disulfide bond">
    <location>
        <begin position="70"/>
        <end position="77"/>
    </location>
</feature>
<feature type="strand" evidence="6">
    <location>
        <begin position="44"/>
        <end position="46"/>
    </location>
</feature>
<feature type="helix" evidence="6">
    <location>
        <begin position="49"/>
        <end position="51"/>
    </location>
</feature>
<feature type="helix" evidence="6">
    <location>
        <begin position="57"/>
        <end position="59"/>
    </location>
</feature>
<feature type="helix" evidence="6">
    <location>
        <begin position="63"/>
        <end position="65"/>
    </location>
</feature>
<feature type="helix" evidence="6">
    <location>
        <begin position="81"/>
        <end position="89"/>
    </location>
</feature>
<feature type="turn" evidence="6">
    <location>
        <begin position="90"/>
        <end position="93"/>
    </location>
</feature>
<feature type="helix" evidence="6">
    <location>
        <begin position="94"/>
        <end position="96"/>
    </location>
</feature>
<feature type="strand" evidence="6">
    <location>
        <begin position="100"/>
        <end position="103"/>
    </location>
</feature>
<feature type="strand" evidence="6">
    <location>
        <begin position="107"/>
        <end position="109"/>
    </location>
</feature>
<feature type="strand" evidence="6">
    <location>
        <begin position="114"/>
        <end position="116"/>
    </location>
</feature>
<feature type="strand" evidence="6">
    <location>
        <begin position="119"/>
        <end position="121"/>
    </location>
</feature>
<feature type="strand" evidence="6">
    <location>
        <begin position="128"/>
        <end position="135"/>
    </location>
</feature>
<feature type="turn" evidence="6">
    <location>
        <begin position="137"/>
        <end position="139"/>
    </location>
</feature>
<feature type="helix" evidence="6">
    <location>
        <begin position="142"/>
        <end position="154"/>
    </location>
</feature>
<feature type="strand" evidence="6">
    <location>
        <begin position="158"/>
        <end position="163"/>
    </location>
</feature>
<feature type="strand" evidence="6">
    <location>
        <begin position="167"/>
        <end position="170"/>
    </location>
</feature>
<feature type="turn" evidence="6">
    <location>
        <begin position="179"/>
        <end position="182"/>
    </location>
</feature>
<feature type="strand" evidence="6">
    <location>
        <begin position="184"/>
        <end position="186"/>
    </location>
</feature>
<feature type="strand" evidence="6">
    <location>
        <begin position="189"/>
        <end position="192"/>
    </location>
</feature>
<feature type="strand" evidence="7">
    <location>
        <begin position="194"/>
        <end position="196"/>
    </location>
</feature>
<feature type="strand" evidence="4">
    <location>
        <begin position="210"/>
        <end position="212"/>
    </location>
</feature>
<feature type="helix" evidence="6">
    <location>
        <begin position="213"/>
        <end position="218"/>
    </location>
</feature>
<feature type="strand" evidence="6">
    <location>
        <begin position="219"/>
        <end position="221"/>
    </location>
</feature>
<feature type="strand" evidence="6">
    <location>
        <begin position="224"/>
        <end position="227"/>
    </location>
</feature>
<feature type="helix" evidence="6">
    <location>
        <begin position="232"/>
        <end position="247"/>
    </location>
</feature>
<feature type="strand" evidence="6">
    <location>
        <begin position="252"/>
        <end position="255"/>
    </location>
</feature>
<feature type="helix" evidence="6">
    <location>
        <begin position="258"/>
        <end position="260"/>
    </location>
</feature>
<feature type="helix" evidence="6">
    <location>
        <begin position="263"/>
        <end position="276"/>
    </location>
</feature>
<feature type="strand" evidence="6">
    <location>
        <begin position="280"/>
        <end position="283"/>
    </location>
</feature>
<feature type="helix" evidence="6">
    <location>
        <begin position="294"/>
        <end position="302"/>
    </location>
</feature>
<feature type="strand" evidence="6">
    <location>
        <begin position="303"/>
        <end position="308"/>
    </location>
</feature>
<feature type="helix" evidence="6">
    <location>
        <begin position="310"/>
        <end position="320"/>
    </location>
</feature>
<feature type="helix" evidence="6">
    <location>
        <begin position="327"/>
        <end position="340"/>
    </location>
</feature>
<feature type="strand" evidence="7">
    <location>
        <begin position="341"/>
        <end position="343"/>
    </location>
</feature>
<feature type="helix" evidence="6">
    <location>
        <begin position="344"/>
        <end position="346"/>
    </location>
</feature>
<feature type="strand" evidence="5">
    <location>
        <begin position="347"/>
        <end position="349"/>
    </location>
</feature>
<feature type="strand" evidence="5">
    <location>
        <begin position="362"/>
        <end position="364"/>
    </location>
</feature>
<feature type="helix" evidence="6">
    <location>
        <begin position="366"/>
        <end position="378"/>
    </location>
</feature>
<feature type="strand" evidence="6">
    <location>
        <begin position="379"/>
        <end position="386"/>
    </location>
</feature>
<feature type="helix" evidence="6">
    <location>
        <begin position="389"/>
        <end position="391"/>
    </location>
</feature>
<feature type="helix" evidence="6">
    <location>
        <begin position="400"/>
        <end position="402"/>
    </location>
</feature>
<feature type="helix" evidence="6">
    <location>
        <begin position="413"/>
        <end position="421"/>
    </location>
</feature>
<feature type="helix" evidence="6">
    <location>
        <begin position="424"/>
        <end position="427"/>
    </location>
</feature>
<feature type="helix" evidence="6">
    <location>
        <begin position="429"/>
        <end position="433"/>
    </location>
</feature>
<feature type="strand" evidence="6">
    <location>
        <begin position="435"/>
        <end position="441"/>
    </location>
</feature>
<feature type="strand" evidence="6">
    <location>
        <begin position="443"/>
        <end position="452"/>
    </location>
</feature>
<feature type="strand" evidence="6">
    <location>
        <begin position="455"/>
        <end position="462"/>
    </location>
</feature>
<feature type="strand" evidence="8">
    <location>
        <begin position="465"/>
        <end position="467"/>
    </location>
</feature>
<feature type="strand" evidence="6">
    <location>
        <begin position="469"/>
        <end position="471"/>
    </location>
</feature>
<feature type="strand" evidence="7">
    <location>
        <begin position="473"/>
        <end position="475"/>
    </location>
</feature>
<feature type="strand" evidence="6">
    <location>
        <begin position="480"/>
        <end position="483"/>
    </location>
</feature>
<feature type="turn" evidence="6">
    <location>
        <begin position="486"/>
        <end position="491"/>
    </location>
</feature>
<feature type="strand" evidence="6">
    <location>
        <begin position="496"/>
        <end position="498"/>
    </location>
</feature>
<feature type="helix" evidence="6">
    <location>
        <begin position="500"/>
        <end position="502"/>
    </location>
</feature>
<feature type="strand" evidence="6">
    <location>
        <begin position="507"/>
        <end position="509"/>
    </location>
</feature>
<feature type="strand" evidence="6">
    <location>
        <begin position="514"/>
        <end position="519"/>
    </location>
</feature>
<feature type="strand" evidence="6">
    <location>
        <begin position="527"/>
        <end position="532"/>
    </location>
</feature>
<feature type="strand" evidence="6">
    <location>
        <begin position="534"/>
        <end position="536"/>
    </location>
</feature>
<feature type="strand" evidence="6">
    <location>
        <begin position="541"/>
        <end position="547"/>
    </location>
</feature>
<feature type="strand" evidence="6">
    <location>
        <begin position="555"/>
        <end position="558"/>
    </location>
</feature>
<feature type="strand" evidence="6">
    <location>
        <begin position="561"/>
        <end position="563"/>
    </location>
</feature>
<feature type="helix" evidence="6">
    <location>
        <begin position="565"/>
        <end position="567"/>
    </location>
</feature>
<feature type="strand" evidence="6">
    <location>
        <begin position="568"/>
        <end position="571"/>
    </location>
</feature>
<feature type="strand" evidence="6">
    <location>
        <begin position="573"/>
        <end position="579"/>
    </location>
</feature>
<feature type="strand" evidence="6">
    <location>
        <begin position="585"/>
        <end position="593"/>
    </location>
</feature>
<feature type="strand" evidence="6">
    <location>
        <begin position="603"/>
        <end position="608"/>
    </location>
</feature>
<feature type="strand" evidence="6">
    <location>
        <begin position="610"/>
        <end position="622"/>
    </location>
</feature>
<feature type="strand" evidence="6">
    <location>
        <begin position="630"/>
        <end position="637"/>
    </location>
</feature>
<feature type="helix" evidence="6">
    <location>
        <begin position="638"/>
        <end position="640"/>
    </location>
</feature>
<feature type="turn" evidence="6">
    <location>
        <begin position="641"/>
        <end position="643"/>
    </location>
</feature>
<feature type="helix" evidence="6">
    <location>
        <begin position="645"/>
        <end position="647"/>
    </location>
</feature>
<feature type="strand" evidence="6">
    <location>
        <begin position="655"/>
        <end position="658"/>
    </location>
</feature>
<feature type="strand" evidence="6">
    <location>
        <begin position="663"/>
        <end position="670"/>
    </location>
</feature>
<feature type="strand" evidence="6">
    <location>
        <begin position="673"/>
        <end position="683"/>
    </location>
</feature>
<feature type="strand" evidence="6">
    <location>
        <begin position="686"/>
        <end position="689"/>
    </location>
</feature>
<feature type="strand" evidence="6">
    <location>
        <begin position="695"/>
        <end position="698"/>
    </location>
</feature>
<feature type="strand" evidence="6">
    <location>
        <begin position="701"/>
        <end position="710"/>
    </location>
</feature>
<protein>
    <recommendedName>
        <fullName>Cyclomaltodextrin glucanotransferase</fullName>
        <ecNumber>2.4.1.19</ecNumber>
    </recommendedName>
    <alternativeName>
        <fullName>Cyclodextrin-glycosyltransferase</fullName>
        <shortName>CGTase</shortName>
    </alternativeName>
</protein>
<gene>
    <name type="primary">cgt</name>
</gene>
<sequence>MKRFMKLTAVWTLWLSLTLGLLSPVHAAPDTSVSNKQNFSTDVIYQIFTDRFSDGNPANNPTGAAFDGSCTNLRLYCGGDWQGIINKINDGYLTGMGITAIWISQPVENIYSVINYSGVNNTAYHGYWARDFKKTNPAYGTMQDFKNLIDTAHAHNIKVIIDFAPNHTSPASSDDPSFAENGRLYDNGNLLGGYTNDTQNLFHHYGGTDFSTIENGIYKNLYDLADLNHNNSSVDVYLKDAIKMWLDLGVDGIRVDAVKHMPFGWQKSFMATINNYKPVFTFGEWFLGVNEISPEYHQFANESGMSLLDFRFAQKARQVFRDNTDNMYGLKAMLEGSEVDYAQVNDQVTFIDNHDMERFHTSNGDRRKLEQALAFTLTSRGVPAIYYGSEQYMSGGNDPDNRARLPSFSTTTTAYQVIQKLAPLRKSNPAIAYGSTHERWINNDVIIYERKFGNNVAVVAINRNMNTPASITGLVTSLRRASYNDVLGGILNGNTLTVGAGGAASNFTLAPGGTAVWQYTTDATTPIIGNVGPMMAKPGVTITIDGRGFGSGKGTVYFGTTAVTGADIVAWEDTQIQVKIPAVPGGIYDIRVANAAGAASNIYDNFEVLTGDQVTVRFVINNATTALGQNVFLTGNVSELGNWDPNNAIGPMYNQVVYQYPTWYYDVSVPAGQTIEFKFLKKQGSTVTWEGGANRTFTTPTSGTATVNVNWQP</sequence>
<keyword id="KW-0002">3D-structure</keyword>
<keyword id="KW-0106">Calcium</keyword>
<keyword id="KW-1015">Disulfide bond</keyword>
<keyword id="KW-0328">Glycosyltransferase</keyword>
<keyword id="KW-0479">Metal-binding</keyword>
<keyword id="KW-0964">Secreted</keyword>
<keyword id="KW-0732">Signal</keyword>
<keyword id="KW-0808">Transferase</keyword>
<proteinExistence type="evidence at protein level"/>
<evidence type="ECO:0000250" key="1"/>
<evidence type="ECO:0000255" key="2">
    <source>
        <dbReference type="PROSITE-ProRule" id="PRU00594"/>
    </source>
</evidence>
<evidence type="ECO:0000305" key="3"/>
<evidence type="ECO:0007829" key="4">
    <source>
        <dbReference type="PDB" id="1D7F"/>
    </source>
</evidence>
<evidence type="ECO:0007829" key="5">
    <source>
        <dbReference type="PDB" id="1DED"/>
    </source>
</evidence>
<evidence type="ECO:0007829" key="6">
    <source>
        <dbReference type="PDB" id="1PAM"/>
    </source>
</evidence>
<evidence type="ECO:0007829" key="7">
    <source>
        <dbReference type="PDB" id="1UKT"/>
    </source>
</evidence>
<evidence type="ECO:0007829" key="8">
    <source>
        <dbReference type="PDB" id="1V3J"/>
    </source>
</evidence>
<comment type="catalytic activity">
    <reaction>
        <text>Cyclizes part of a (1-&gt;4)-alpha-D-glucan chain by formation of a (1-&gt;4)-alpha-D-glucosidic bond.</text>
        <dbReference type="EC" id="2.4.1.19"/>
    </reaction>
</comment>
<comment type="cofactor">
    <cofactor>
        <name>Ca(2+)</name>
        <dbReference type="ChEBI" id="CHEBI:29108"/>
    </cofactor>
    <text>Binds 2 calcium ions per subunit.</text>
</comment>
<comment type="subunit">
    <text>Monomer.</text>
</comment>
<comment type="subcellular location">
    <subcellularLocation>
        <location evidence="1">Secreted</location>
    </subcellularLocation>
</comment>
<comment type="domain">
    <text>May consist of two protein domains: the one in the N-terminal side cleaves the alpha-1,4-glucosidic bond in starch, and the other in the C-terminal side catalyzes other activities, including the reconstitution of an alpha-1,4-glucosidic linkage for cyclizing the maltooligosaccharide produced.</text>
</comment>
<comment type="similarity">
    <text evidence="3">Belongs to the glycosyl hydrolase 13 family.</text>
</comment>
<name>CDGT_BACS0</name>
<accession>P05618</accession>
<dbReference type="EC" id="2.4.1.19"/>
<dbReference type="EMBL" id="M17366">
    <property type="protein sequence ID" value="AAA22308.1"/>
    <property type="molecule type" value="Genomic_DNA"/>
</dbReference>
<dbReference type="PIR" id="A26678">
    <property type="entry name" value="ALBSG1"/>
</dbReference>
<dbReference type="PDB" id="1D7F">
    <property type="method" value="X-ray"/>
    <property type="resolution" value="1.90 A"/>
    <property type="chains" value="A/B=28-713"/>
</dbReference>
<dbReference type="PDB" id="1DED">
    <property type="method" value="X-ray"/>
    <property type="resolution" value="2.00 A"/>
    <property type="chains" value="A/B=28-713"/>
</dbReference>
<dbReference type="PDB" id="1I75">
    <property type="method" value="X-ray"/>
    <property type="resolution" value="2.00 A"/>
    <property type="chains" value="A/B=28-713"/>
</dbReference>
<dbReference type="PDB" id="1PAM">
    <property type="method" value="X-ray"/>
    <property type="resolution" value="1.80 A"/>
    <property type="chains" value="A/B=28-713"/>
</dbReference>
<dbReference type="PDB" id="1UKQ">
    <property type="method" value="X-ray"/>
    <property type="resolution" value="2.00 A"/>
    <property type="chains" value="A/B=28-713"/>
</dbReference>
<dbReference type="PDB" id="1UKS">
    <property type="method" value="X-ray"/>
    <property type="resolution" value="1.90 A"/>
    <property type="chains" value="A/B=28-713"/>
</dbReference>
<dbReference type="PDB" id="1UKT">
    <property type="method" value="X-ray"/>
    <property type="resolution" value="2.20 A"/>
    <property type="chains" value="A/B=28-713"/>
</dbReference>
<dbReference type="PDB" id="1V3J">
    <property type="method" value="X-ray"/>
    <property type="resolution" value="2.00 A"/>
    <property type="chains" value="A/B=28-713"/>
</dbReference>
<dbReference type="PDB" id="1V3K">
    <property type="method" value="X-ray"/>
    <property type="resolution" value="2.00 A"/>
    <property type="chains" value="A/B=28-713"/>
</dbReference>
<dbReference type="PDB" id="1V3L">
    <property type="method" value="X-ray"/>
    <property type="resolution" value="2.10 A"/>
    <property type="chains" value="A/B=28-713"/>
</dbReference>
<dbReference type="PDB" id="1V3M">
    <property type="method" value="X-ray"/>
    <property type="resolution" value="2.00 A"/>
    <property type="chains" value="A/B=28-713"/>
</dbReference>
<dbReference type="PDBsum" id="1D7F"/>
<dbReference type="PDBsum" id="1DED"/>
<dbReference type="PDBsum" id="1I75"/>
<dbReference type="PDBsum" id="1PAM"/>
<dbReference type="PDBsum" id="1UKQ"/>
<dbReference type="PDBsum" id="1UKS"/>
<dbReference type="PDBsum" id="1UKT"/>
<dbReference type="PDBsum" id="1V3J"/>
<dbReference type="PDBsum" id="1V3K"/>
<dbReference type="PDBsum" id="1V3L"/>
<dbReference type="PDBsum" id="1V3M"/>
<dbReference type="SMR" id="P05618"/>
<dbReference type="DrugBank" id="DB01841">
    <property type="generic name" value="4,6-Dideoxyglucose"/>
</dbReference>
<dbReference type="DrugBank" id="DB02120">
    <property type="generic name" value="6-Amino-4-Hydroxymethyl-Cyclohex-4-Ene-1,2,3-Triol"/>
</dbReference>
<dbReference type="DrugBank" id="DB02379">
    <property type="generic name" value="Beta-D-Glucose"/>
</dbReference>
<dbReference type="DrugBank" id="DB03206">
    <property type="generic name" value="Duvoglustat"/>
</dbReference>
<dbReference type="CAZy" id="CBM20">
    <property type="family name" value="Carbohydrate-Binding Module Family 20"/>
</dbReference>
<dbReference type="CAZy" id="GH13">
    <property type="family name" value="Glycoside Hydrolase Family 13"/>
</dbReference>
<dbReference type="BRENDA" id="2.4.1.19">
    <property type="organism ID" value="691"/>
</dbReference>
<dbReference type="EvolutionaryTrace" id="P05618"/>
<dbReference type="GO" id="GO:0005576">
    <property type="term" value="C:extracellular region"/>
    <property type="evidence" value="ECO:0007669"/>
    <property type="project" value="UniProtKB-SubCell"/>
</dbReference>
<dbReference type="GO" id="GO:0004556">
    <property type="term" value="F:alpha-amylase activity"/>
    <property type="evidence" value="ECO:0007669"/>
    <property type="project" value="InterPro"/>
</dbReference>
<dbReference type="GO" id="GO:0043895">
    <property type="term" value="F:cyclomaltodextrin glucanotransferase activity"/>
    <property type="evidence" value="ECO:0007669"/>
    <property type="project" value="UniProtKB-EC"/>
</dbReference>
<dbReference type="GO" id="GO:0046872">
    <property type="term" value="F:metal ion binding"/>
    <property type="evidence" value="ECO:0007669"/>
    <property type="project" value="UniProtKB-KW"/>
</dbReference>
<dbReference type="GO" id="GO:2001070">
    <property type="term" value="F:starch binding"/>
    <property type="evidence" value="ECO:0007669"/>
    <property type="project" value="InterPro"/>
</dbReference>
<dbReference type="GO" id="GO:0005975">
    <property type="term" value="P:carbohydrate metabolic process"/>
    <property type="evidence" value="ECO:0007669"/>
    <property type="project" value="InterPro"/>
</dbReference>
<dbReference type="CDD" id="cd11320">
    <property type="entry name" value="AmyAc_AmyMalt_CGTase_like"/>
    <property type="match status" value="1"/>
</dbReference>
<dbReference type="CDD" id="cd05807">
    <property type="entry name" value="CBM20_CGTase"/>
    <property type="match status" value="1"/>
</dbReference>
<dbReference type="CDD" id="cd00604">
    <property type="entry name" value="IPT_CGTD"/>
    <property type="match status" value="1"/>
</dbReference>
<dbReference type="Gene3D" id="3.20.20.80">
    <property type="entry name" value="Glycosidases"/>
    <property type="match status" value="1"/>
</dbReference>
<dbReference type="Gene3D" id="2.60.40.1180">
    <property type="entry name" value="Golgi alpha-mannosidase II"/>
    <property type="match status" value="1"/>
</dbReference>
<dbReference type="Gene3D" id="2.60.40.10">
    <property type="entry name" value="Immunoglobulins"/>
    <property type="match status" value="2"/>
</dbReference>
<dbReference type="InterPro" id="IPR006048">
    <property type="entry name" value="A-amylase/branching_C"/>
</dbReference>
<dbReference type="InterPro" id="IPR031319">
    <property type="entry name" value="A-amylase_C"/>
</dbReference>
<dbReference type="InterPro" id="IPR006046">
    <property type="entry name" value="Alpha_amylase"/>
</dbReference>
<dbReference type="InterPro" id="IPR013784">
    <property type="entry name" value="Carb-bd-like_fold"/>
</dbReference>
<dbReference type="InterPro" id="IPR002044">
    <property type="entry name" value="CBM20"/>
</dbReference>
<dbReference type="InterPro" id="IPR006047">
    <property type="entry name" value="Glyco_hydro_13_cat_dom"/>
</dbReference>
<dbReference type="InterPro" id="IPR013780">
    <property type="entry name" value="Glyco_hydro_b"/>
</dbReference>
<dbReference type="InterPro" id="IPR017853">
    <property type="entry name" value="Glycoside_hydrolase_SF"/>
</dbReference>
<dbReference type="InterPro" id="IPR013783">
    <property type="entry name" value="Ig-like_fold"/>
</dbReference>
<dbReference type="InterPro" id="IPR014756">
    <property type="entry name" value="Ig_E-set"/>
</dbReference>
<dbReference type="InterPro" id="IPR002909">
    <property type="entry name" value="IPT_dom"/>
</dbReference>
<dbReference type="PANTHER" id="PTHR10357:SF215">
    <property type="entry name" value="ALPHA-AMYLASE 1"/>
    <property type="match status" value="1"/>
</dbReference>
<dbReference type="PANTHER" id="PTHR10357">
    <property type="entry name" value="ALPHA-AMYLASE FAMILY MEMBER"/>
    <property type="match status" value="1"/>
</dbReference>
<dbReference type="Pfam" id="PF00128">
    <property type="entry name" value="Alpha-amylase"/>
    <property type="match status" value="1"/>
</dbReference>
<dbReference type="Pfam" id="PF02806">
    <property type="entry name" value="Alpha-amylase_C"/>
    <property type="match status" value="1"/>
</dbReference>
<dbReference type="Pfam" id="PF00686">
    <property type="entry name" value="CBM_20"/>
    <property type="match status" value="1"/>
</dbReference>
<dbReference type="Pfam" id="PF01833">
    <property type="entry name" value="TIG"/>
    <property type="match status" value="1"/>
</dbReference>
<dbReference type="PRINTS" id="PR00110">
    <property type="entry name" value="ALPHAAMYLASE"/>
</dbReference>
<dbReference type="SMART" id="SM00642">
    <property type="entry name" value="Aamy"/>
    <property type="match status" value="1"/>
</dbReference>
<dbReference type="SMART" id="SM00632">
    <property type="entry name" value="Aamy_C"/>
    <property type="match status" value="1"/>
</dbReference>
<dbReference type="SMART" id="SM01065">
    <property type="entry name" value="CBM_2"/>
    <property type="match status" value="1"/>
</dbReference>
<dbReference type="SUPFAM" id="SSF51445">
    <property type="entry name" value="(Trans)glycosidases"/>
    <property type="match status" value="1"/>
</dbReference>
<dbReference type="SUPFAM" id="SSF81296">
    <property type="entry name" value="E set domains"/>
    <property type="match status" value="1"/>
</dbReference>
<dbReference type="SUPFAM" id="SSF51011">
    <property type="entry name" value="Glycosyl hydrolase domain"/>
    <property type="match status" value="1"/>
</dbReference>
<dbReference type="SUPFAM" id="SSF49452">
    <property type="entry name" value="Starch-binding domain-like"/>
    <property type="match status" value="1"/>
</dbReference>
<dbReference type="PROSITE" id="PS51166">
    <property type="entry name" value="CBM20"/>
    <property type="match status" value="1"/>
</dbReference>